<evidence type="ECO:0000250" key="1"/>
<evidence type="ECO:0000305" key="2"/>
<feature type="chain" id="PRO_0000098381" description="Isoleucine--tRNA ligase">
    <location>
        <begin position="1" status="less than"/>
        <end position="92"/>
    </location>
</feature>
<feature type="binding site" evidence="1">
    <location>
        <position position="55"/>
    </location>
    <ligand>
        <name>Zn(2+)</name>
        <dbReference type="ChEBI" id="CHEBI:29105"/>
    </ligand>
</feature>
<feature type="binding site" evidence="1">
    <location>
        <position position="58"/>
    </location>
    <ligand>
        <name>Zn(2+)</name>
        <dbReference type="ChEBI" id="CHEBI:29105"/>
    </ligand>
</feature>
<feature type="binding site" evidence="1">
    <location>
        <position position="75"/>
    </location>
    <ligand>
        <name>Zn(2+)</name>
        <dbReference type="ChEBI" id="CHEBI:29105"/>
    </ligand>
</feature>
<feature type="binding site" evidence="1">
    <location>
        <position position="78"/>
    </location>
    <ligand>
        <name>Zn(2+)</name>
        <dbReference type="ChEBI" id="CHEBI:29105"/>
    </ligand>
</feature>
<feature type="non-terminal residue">
    <location>
        <position position="1"/>
    </location>
</feature>
<proteinExistence type="inferred from homology"/>
<sequence>DLAAKLNALGEELRFVLLTSGANVADYAQAPADAWQSDLLKGLKVVLSKAEGEKCPRCWHYTSDVGKVAEHAEICGRCVSNVAGDGEQRKFA</sequence>
<protein>
    <recommendedName>
        <fullName>Isoleucine--tRNA ligase</fullName>
        <ecNumber>6.1.1.5</ecNumber>
    </recommendedName>
    <alternativeName>
        <fullName>Isoleucyl-tRNA synthetase</fullName>
        <shortName>IleRS</shortName>
    </alternativeName>
</protein>
<keyword id="KW-0030">Aminoacyl-tRNA synthetase</keyword>
<keyword id="KW-0067">ATP-binding</keyword>
<keyword id="KW-0963">Cytoplasm</keyword>
<keyword id="KW-0436">Ligase</keyword>
<keyword id="KW-0479">Metal-binding</keyword>
<keyword id="KW-0547">Nucleotide-binding</keyword>
<keyword id="KW-0648">Protein biosynthesis</keyword>
<keyword id="KW-0862">Zinc</keyword>
<gene>
    <name type="primary">ileS</name>
</gene>
<name>SYI_KLEAE</name>
<dbReference type="EC" id="6.1.1.5"/>
<dbReference type="EMBL" id="M26713">
    <property type="protein sequence ID" value="AAA24803.1"/>
    <property type="molecule type" value="Genomic_DNA"/>
</dbReference>
<dbReference type="STRING" id="548.EAG7_03328"/>
<dbReference type="GO" id="GO:0005737">
    <property type="term" value="C:cytoplasm"/>
    <property type="evidence" value="ECO:0007669"/>
    <property type="project" value="UniProtKB-SubCell"/>
</dbReference>
<dbReference type="GO" id="GO:0005524">
    <property type="term" value="F:ATP binding"/>
    <property type="evidence" value="ECO:0007669"/>
    <property type="project" value="UniProtKB-KW"/>
</dbReference>
<dbReference type="GO" id="GO:0004822">
    <property type="term" value="F:isoleucine-tRNA ligase activity"/>
    <property type="evidence" value="ECO:0007669"/>
    <property type="project" value="UniProtKB-EC"/>
</dbReference>
<dbReference type="GO" id="GO:0046872">
    <property type="term" value="F:metal ion binding"/>
    <property type="evidence" value="ECO:0007669"/>
    <property type="project" value="UniProtKB-KW"/>
</dbReference>
<dbReference type="GO" id="GO:0006418">
    <property type="term" value="P:tRNA aminoacylation for protein translation"/>
    <property type="evidence" value="ECO:0007669"/>
    <property type="project" value="InterPro"/>
</dbReference>
<dbReference type="Gene3D" id="1.10.730.20">
    <property type="match status" value="1"/>
</dbReference>
<dbReference type="InterPro" id="IPR009080">
    <property type="entry name" value="tRNAsynth_Ia_anticodon-bd"/>
</dbReference>
<dbReference type="InterPro" id="IPR010663">
    <property type="entry name" value="Znf_FPG/IleRS"/>
</dbReference>
<dbReference type="Pfam" id="PF06827">
    <property type="entry name" value="zf-FPG_IleRS"/>
    <property type="match status" value="1"/>
</dbReference>
<dbReference type="SUPFAM" id="SSF47323">
    <property type="entry name" value="Anticodon-binding domain of a subclass of class I aminoacyl-tRNA synthetases"/>
    <property type="match status" value="1"/>
</dbReference>
<comment type="function">
    <text evidence="1">Catalyzes the attachment of isoleucine to tRNA(Ile). As IleRS can inadvertently accommodate and process structurally similar amino acids such as valine, to avoid such errors it has two additional distinct tRNA(Ile)-dependent editing activities. One activity is designated as 'pretransfer' editing and involves the hydrolysis of activated Val-AMP. The other activity is designated 'posttransfer' editing and involves deacylation of mischarged Val-tRNA(Ile) (By similarity).</text>
</comment>
<comment type="catalytic activity">
    <reaction>
        <text>tRNA(Ile) + L-isoleucine + ATP = L-isoleucyl-tRNA(Ile) + AMP + diphosphate</text>
        <dbReference type="Rhea" id="RHEA:11060"/>
        <dbReference type="Rhea" id="RHEA-COMP:9666"/>
        <dbReference type="Rhea" id="RHEA-COMP:9695"/>
        <dbReference type="ChEBI" id="CHEBI:30616"/>
        <dbReference type="ChEBI" id="CHEBI:33019"/>
        <dbReference type="ChEBI" id="CHEBI:58045"/>
        <dbReference type="ChEBI" id="CHEBI:78442"/>
        <dbReference type="ChEBI" id="CHEBI:78528"/>
        <dbReference type="ChEBI" id="CHEBI:456215"/>
        <dbReference type="EC" id="6.1.1.5"/>
    </reaction>
</comment>
<comment type="cofactor">
    <cofactor evidence="1">
        <name>Zn(2+)</name>
        <dbReference type="ChEBI" id="CHEBI:29105"/>
    </cofactor>
    <text evidence="1">Binds 1 zinc ion per subunit.</text>
</comment>
<comment type="subunit">
    <text evidence="1">Monomer.</text>
</comment>
<comment type="subcellular location">
    <subcellularLocation>
        <location evidence="1">Cytoplasm</location>
    </subcellularLocation>
</comment>
<comment type="domain">
    <text evidence="1">IleRS has two distinct active sites: one for aminoacylation and one for editing. The misactivated valine is translocated from the active site to the editing site, which sterically excludes the correctly activated isoleucine. The single editing site contains two valyl binding pockets, one specific for each substrate (Val-AMP or Val-tRNA(Ile)) (By similarity).</text>
</comment>
<comment type="similarity">
    <text evidence="2">Belongs to the class-I aminoacyl-tRNA synthetase family. IleS type 1 subfamily.</text>
</comment>
<organism>
    <name type="scientific">Klebsiella aerogenes</name>
    <name type="common">Enterobacter aerogenes</name>
    <dbReference type="NCBI Taxonomy" id="548"/>
    <lineage>
        <taxon>Bacteria</taxon>
        <taxon>Pseudomonadati</taxon>
        <taxon>Pseudomonadota</taxon>
        <taxon>Gammaproteobacteria</taxon>
        <taxon>Enterobacterales</taxon>
        <taxon>Enterobacteriaceae</taxon>
        <taxon>Klebsiella/Raoultella group</taxon>
        <taxon>Klebsiella</taxon>
    </lineage>
</organism>
<accession>P13502</accession>
<reference key="1">
    <citation type="journal article" date="1990" name="J. Bacteriol.">
        <title>Cloning and nucleotide sequence of the Enterobacter aerogenes signal peptidase II (lsp) gene.</title>
        <authorList>
            <person name="Isaki L."/>
            <person name="Kawakami M."/>
            <person name="Beers R."/>
            <person name="Hom R."/>
            <person name="Wu H.C."/>
        </authorList>
    </citation>
    <scope>NUCLEOTIDE SEQUENCE [GENOMIC DNA]</scope>
</reference>